<organism>
    <name type="scientific">Shigella dysenteriae serotype 1 (strain Sd197)</name>
    <dbReference type="NCBI Taxonomy" id="300267"/>
    <lineage>
        <taxon>Bacteria</taxon>
        <taxon>Pseudomonadati</taxon>
        <taxon>Pseudomonadota</taxon>
        <taxon>Gammaproteobacteria</taxon>
        <taxon>Enterobacterales</taxon>
        <taxon>Enterobacteriaceae</taxon>
        <taxon>Shigella</taxon>
    </lineage>
</organism>
<comment type="catalytic activity">
    <reaction evidence="1">
        <text>L-glutamine + H2O = L-glutamate + NH4(+)</text>
        <dbReference type="Rhea" id="RHEA:15889"/>
        <dbReference type="ChEBI" id="CHEBI:15377"/>
        <dbReference type="ChEBI" id="CHEBI:28938"/>
        <dbReference type="ChEBI" id="CHEBI:29985"/>
        <dbReference type="ChEBI" id="CHEBI:58359"/>
        <dbReference type="EC" id="3.5.1.2"/>
    </reaction>
</comment>
<comment type="subunit">
    <text evidence="1">Homotetramer.</text>
</comment>
<comment type="similarity">
    <text evidence="1">Belongs to the glutaminase family.</text>
</comment>
<sequence length="308" mass="33498">MAVAMDNAILENILRQVRPLIGQGKVADYIPALATVDGSRLGIAICTVDGQLFQAGDAQERFSIQSISKVLSLVVAMRHYSEEEIWQRVGKDPSGSPFNSLVQLEMEQGIPRNPFINAGALVVCDMLQGRLSAPRQRMLEVVRGLSGVSDISYDTVVARSEFEHSARNAAIAWLMKSFGNFHHDVTTVLQNYFHYCALKMSCVELARTFVFLANQGKAIHIDEPVVTPMQARQINALMATSGIYQNAGEFAWRVGLPAKSGVGGGIVAIVPHEMAIAVWSPELDDAGNSLAGIAVLEQLTKQLGRSVY</sequence>
<gene>
    <name evidence="1" type="primary">glsA</name>
    <name type="ordered locus">SDY_1631</name>
</gene>
<protein>
    <recommendedName>
        <fullName evidence="1">Glutaminase</fullName>
        <ecNumber evidence="1">3.5.1.2</ecNumber>
    </recommendedName>
</protein>
<accession>Q32G00</accession>
<name>GLSA_SHIDS</name>
<feature type="chain" id="PRO_1000048365" description="Glutaminase">
    <location>
        <begin position="1"/>
        <end position="308"/>
    </location>
</feature>
<feature type="binding site" evidence="1">
    <location>
        <position position="66"/>
    </location>
    <ligand>
        <name>substrate</name>
    </ligand>
</feature>
<feature type="binding site" evidence="1">
    <location>
        <position position="117"/>
    </location>
    <ligand>
        <name>substrate</name>
    </ligand>
</feature>
<feature type="binding site" evidence="1">
    <location>
        <position position="161"/>
    </location>
    <ligand>
        <name>substrate</name>
    </ligand>
</feature>
<feature type="binding site" evidence="1">
    <location>
        <position position="168"/>
    </location>
    <ligand>
        <name>substrate</name>
    </ligand>
</feature>
<feature type="binding site" evidence="1">
    <location>
        <position position="192"/>
    </location>
    <ligand>
        <name>substrate</name>
    </ligand>
</feature>
<feature type="binding site" evidence="1">
    <location>
        <position position="244"/>
    </location>
    <ligand>
        <name>substrate</name>
    </ligand>
</feature>
<feature type="binding site" evidence="1">
    <location>
        <position position="262"/>
    </location>
    <ligand>
        <name>substrate</name>
    </ligand>
</feature>
<keyword id="KW-0378">Hydrolase</keyword>
<keyword id="KW-1185">Reference proteome</keyword>
<dbReference type="EC" id="3.5.1.2" evidence="1"/>
<dbReference type="EMBL" id="CP000034">
    <property type="protein sequence ID" value="ABB61755.1"/>
    <property type="molecule type" value="Genomic_DNA"/>
</dbReference>
<dbReference type="RefSeq" id="WP_000257407.1">
    <property type="nucleotide sequence ID" value="NC_007606.1"/>
</dbReference>
<dbReference type="RefSeq" id="YP_403246.1">
    <property type="nucleotide sequence ID" value="NC_007606.1"/>
</dbReference>
<dbReference type="SMR" id="Q32G00"/>
<dbReference type="STRING" id="300267.SDY_1631"/>
<dbReference type="EnsemblBacteria" id="ABB61755">
    <property type="protein sequence ID" value="ABB61755"/>
    <property type="gene ID" value="SDY_1631"/>
</dbReference>
<dbReference type="KEGG" id="sdy:SDY_1631"/>
<dbReference type="PATRIC" id="fig|300267.13.peg.1964"/>
<dbReference type="HOGENOM" id="CLU_027932_1_1_6"/>
<dbReference type="Proteomes" id="UP000002716">
    <property type="component" value="Chromosome"/>
</dbReference>
<dbReference type="GO" id="GO:0004359">
    <property type="term" value="F:glutaminase activity"/>
    <property type="evidence" value="ECO:0007669"/>
    <property type="project" value="UniProtKB-UniRule"/>
</dbReference>
<dbReference type="GO" id="GO:0006537">
    <property type="term" value="P:glutamate biosynthetic process"/>
    <property type="evidence" value="ECO:0007669"/>
    <property type="project" value="TreeGrafter"/>
</dbReference>
<dbReference type="GO" id="GO:0006543">
    <property type="term" value="P:glutamine catabolic process"/>
    <property type="evidence" value="ECO:0007669"/>
    <property type="project" value="TreeGrafter"/>
</dbReference>
<dbReference type="FunFam" id="3.40.710.10:FF:000005">
    <property type="entry name" value="Glutaminase"/>
    <property type="match status" value="1"/>
</dbReference>
<dbReference type="Gene3D" id="3.40.710.10">
    <property type="entry name" value="DD-peptidase/beta-lactamase superfamily"/>
    <property type="match status" value="1"/>
</dbReference>
<dbReference type="HAMAP" id="MF_00313">
    <property type="entry name" value="Glutaminase"/>
    <property type="match status" value="1"/>
</dbReference>
<dbReference type="InterPro" id="IPR012338">
    <property type="entry name" value="Beta-lactam/transpept-like"/>
</dbReference>
<dbReference type="InterPro" id="IPR015868">
    <property type="entry name" value="Glutaminase"/>
</dbReference>
<dbReference type="NCBIfam" id="TIGR03814">
    <property type="entry name" value="Gln_ase"/>
    <property type="match status" value="1"/>
</dbReference>
<dbReference type="NCBIfam" id="NF002132">
    <property type="entry name" value="PRK00971.1-1"/>
    <property type="match status" value="1"/>
</dbReference>
<dbReference type="NCBIfam" id="NF002133">
    <property type="entry name" value="PRK00971.1-2"/>
    <property type="match status" value="1"/>
</dbReference>
<dbReference type="PANTHER" id="PTHR12544">
    <property type="entry name" value="GLUTAMINASE"/>
    <property type="match status" value="1"/>
</dbReference>
<dbReference type="PANTHER" id="PTHR12544:SF29">
    <property type="entry name" value="GLUTAMINASE"/>
    <property type="match status" value="1"/>
</dbReference>
<dbReference type="Pfam" id="PF04960">
    <property type="entry name" value="Glutaminase"/>
    <property type="match status" value="1"/>
</dbReference>
<dbReference type="SUPFAM" id="SSF56601">
    <property type="entry name" value="beta-lactamase/transpeptidase-like"/>
    <property type="match status" value="1"/>
</dbReference>
<reference key="1">
    <citation type="journal article" date="2005" name="Nucleic Acids Res.">
        <title>Genome dynamics and diversity of Shigella species, the etiologic agents of bacillary dysentery.</title>
        <authorList>
            <person name="Yang F."/>
            <person name="Yang J."/>
            <person name="Zhang X."/>
            <person name="Chen L."/>
            <person name="Jiang Y."/>
            <person name="Yan Y."/>
            <person name="Tang X."/>
            <person name="Wang J."/>
            <person name="Xiong Z."/>
            <person name="Dong J."/>
            <person name="Xue Y."/>
            <person name="Zhu Y."/>
            <person name="Xu X."/>
            <person name="Sun L."/>
            <person name="Chen S."/>
            <person name="Nie H."/>
            <person name="Peng J."/>
            <person name="Xu J."/>
            <person name="Wang Y."/>
            <person name="Yuan Z."/>
            <person name="Wen Y."/>
            <person name="Yao Z."/>
            <person name="Shen Y."/>
            <person name="Qiang B."/>
            <person name="Hou Y."/>
            <person name="Yu J."/>
            <person name="Jin Q."/>
        </authorList>
    </citation>
    <scope>NUCLEOTIDE SEQUENCE [LARGE SCALE GENOMIC DNA]</scope>
    <source>
        <strain>Sd197</strain>
    </source>
</reference>
<evidence type="ECO:0000255" key="1">
    <source>
        <dbReference type="HAMAP-Rule" id="MF_00313"/>
    </source>
</evidence>
<proteinExistence type="inferred from homology"/>